<organism>
    <name type="scientific">Staphylococcus epidermidis (strain ATCC 12228 / FDA PCI 1200)</name>
    <dbReference type="NCBI Taxonomy" id="176280"/>
    <lineage>
        <taxon>Bacteria</taxon>
        <taxon>Bacillati</taxon>
        <taxon>Bacillota</taxon>
        <taxon>Bacilli</taxon>
        <taxon>Bacillales</taxon>
        <taxon>Staphylococcaceae</taxon>
        <taxon>Staphylococcus</taxon>
    </lineage>
</organism>
<protein>
    <recommendedName>
        <fullName evidence="1">Aminomethyltransferase</fullName>
        <ecNumber evidence="1">2.1.2.10</ecNumber>
    </recommendedName>
    <alternativeName>
        <fullName evidence="1">Glycine cleavage system T protein</fullName>
    </alternativeName>
</protein>
<gene>
    <name evidence="1" type="primary">gcvT</name>
    <name type="ordered locus">SE_1222</name>
</gene>
<name>GCST_STAES</name>
<keyword id="KW-0032">Aminotransferase</keyword>
<keyword id="KW-0808">Transferase</keyword>
<dbReference type="EC" id="2.1.2.10" evidence="1"/>
<dbReference type="EMBL" id="AE015929">
    <property type="protein sequence ID" value="AAO04821.1"/>
    <property type="molecule type" value="Genomic_DNA"/>
</dbReference>
<dbReference type="RefSeq" id="NP_764777.1">
    <property type="nucleotide sequence ID" value="NC_004461.1"/>
</dbReference>
<dbReference type="RefSeq" id="WP_001831107.1">
    <property type="nucleotide sequence ID" value="NZ_WBME01000008.1"/>
</dbReference>
<dbReference type="SMR" id="Q8CSF4"/>
<dbReference type="GeneID" id="50018660"/>
<dbReference type="KEGG" id="sep:SE_1222"/>
<dbReference type="PATRIC" id="fig|176280.10.peg.1192"/>
<dbReference type="eggNOG" id="COG0404">
    <property type="taxonomic scope" value="Bacteria"/>
</dbReference>
<dbReference type="HOGENOM" id="CLU_007884_10_2_9"/>
<dbReference type="OrthoDB" id="9774591at2"/>
<dbReference type="Proteomes" id="UP000001411">
    <property type="component" value="Chromosome"/>
</dbReference>
<dbReference type="GO" id="GO:0005829">
    <property type="term" value="C:cytosol"/>
    <property type="evidence" value="ECO:0007669"/>
    <property type="project" value="TreeGrafter"/>
</dbReference>
<dbReference type="GO" id="GO:0005960">
    <property type="term" value="C:glycine cleavage complex"/>
    <property type="evidence" value="ECO:0007669"/>
    <property type="project" value="InterPro"/>
</dbReference>
<dbReference type="GO" id="GO:0004047">
    <property type="term" value="F:aminomethyltransferase activity"/>
    <property type="evidence" value="ECO:0007669"/>
    <property type="project" value="UniProtKB-UniRule"/>
</dbReference>
<dbReference type="GO" id="GO:0008483">
    <property type="term" value="F:transaminase activity"/>
    <property type="evidence" value="ECO:0007669"/>
    <property type="project" value="UniProtKB-KW"/>
</dbReference>
<dbReference type="GO" id="GO:0019464">
    <property type="term" value="P:glycine decarboxylation via glycine cleavage system"/>
    <property type="evidence" value="ECO:0007669"/>
    <property type="project" value="UniProtKB-UniRule"/>
</dbReference>
<dbReference type="FunFam" id="2.40.30.110:FF:000003">
    <property type="entry name" value="Aminomethyltransferase"/>
    <property type="match status" value="1"/>
</dbReference>
<dbReference type="FunFam" id="3.30.70.1400:FF:000001">
    <property type="entry name" value="Aminomethyltransferase"/>
    <property type="match status" value="1"/>
</dbReference>
<dbReference type="Gene3D" id="2.40.30.110">
    <property type="entry name" value="Aminomethyltransferase beta-barrel domains"/>
    <property type="match status" value="1"/>
</dbReference>
<dbReference type="Gene3D" id="3.30.70.1400">
    <property type="entry name" value="Aminomethyltransferase beta-barrel domains"/>
    <property type="match status" value="1"/>
</dbReference>
<dbReference type="Gene3D" id="4.10.1250.10">
    <property type="entry name" value="Aminomethyltransferase fragment"/>
    <property type="match status" value="1"/>
</dbReference>
<dbReference type="Gene3D" id="3.30.1360.120">
    <property type="entry name" value="Probable tRNA modification gtpase trme, domain 1"/>
    <property type="match status" value="1"/>
</dbReference>
<dbReference type="HAMAP" id="MF_00259">
    <property type="entry name" value="GcvT"/>
    <property type="match status" value="1"/>
</dbReference>
<dbReference type="InterPro" id="IPR006223">
    <property type="entry name" value="GCS_T"/>
</dbReference>
<dbReference type="InterPro" id="IPR022903">
    <property type="entry name" value="GCS_T_bac"/>
</dbReference>
<dbReference type="InterPro" id="IPR013977">
    <property type="entry name" value="GCST_C"/>
</dbReference>
<dbReference type="InterPro" id="IPR006222">
    <property type="entry name" value="GCV_T_N"/>
</dbReference>
<dbReference type="InterPro" id="IPR028896">
    <property type="entry name" value="GcvT/YgfZ/DmdA"/>
</dbReference>
<dbReference type="InterPro" id="IPR029043">
    <property type="entry name" value="GcvT/YgfZ_C"/>
</dbReference>
<dbReference type="InterPro" id="IPR027266">
    <property type="entry name" value="TrmE/GcvT_dom1"/>
</dbReference>
<dbReference type="NCBIfam" id="TIGR00528">
    <property type="entry name" value="gcvT"/>
    <property type="match status" value="1"/>
</dbReference>
<dbReference type="NCBIfam" id="NF001567">
    <property type="entry name" value="PRK00389.1"/>
    <property type="match status" value="1"/>
</dbReference>
<dbReference type="PANTHER" id="PTHR43757">
    <property type="entry name" value="AMINOMETHYLTRANSFERASE"/>
    <property type="match status" value="1"/>
</dbReference>
<dbReference type="PANTHER" id="PTHR43757:SF2">
    <property type="entry name" value="AMINOMETHYLTRANSFERASE, MITOCHONDRIAL"/>
    <property type="match status" value="1"/>
</dbReference>
<dbReference type="Pfam" id="PF01571">
    <property type="entry name" value="GCV_T"/>
    <property type="match status" value="1"/>
</dbReference>
<dbReference type="Pfam" id="PF08669">
    <property type="entry name" value="GCV_T_C"/>
    <property type="match status" value="1"/>
</dbReference>
<dbReference type="PIRSF" id="PIRSF006487">
    <property type="entry name" value="GcvT"/>
    <property type="match status" value="1"/>
</dbReference>
<dbReference type="SUPFAM" id="SSF101790">
    <property type="entry name" value="Aminomethyltransferase beta-barrel domain"/>
    <property type="match status" value="1"/>
</dbReference>
<dbReference type="SUPFAM" id="SSF103025">
    <property type="entry name" value="Folate-binding domain"/>
    <property type="match status" value="1"/>
</dbReference>
<evidence type="ECO:0000255" key="1">
    <source>
        <dbReference type="HAMAP-Rule" id="MF_00259"/>
    </source>
</evidence>
<sequence>MTTDLKKTPLYQNYVDSGAKIVEFGGWAMPVQFSSIKEEHNAVRYNVGLFDVSHMGEIEISGKDAEQFIQYILSNDTNLLTNDKAMYSALCNDEGGIIDDLVTYKLNENHYLLIVNAANTNKDYQWIKKHSSNFTVDVSNTSDKYGQLAIQGPHSRALINELVDIDVSHMAMFEFKQNVQIFGKSIILSQSGYTGEDGFEIYCKQEDTKDIWEQLLEYDVTPCGLGARDTLRLEAGLPLHGQDLSESITPYEGGIAFAAKPLIENHFIGKSVLKAQKENGSERRTVGLELLGKGIARTGYDVLDENSNEIGFVTSGTQSPSSGKSIALAIIDRDAFEMGKKVIVQIRKRQVEAKIVKKNQIEK</sequence>
<accession>Q8CSF4</accession>
<proteinExistence type="inferred from homology"/>
<feature type="chain" id="PRO_0000122601" description="Aminomethyltransferase">
    <location>
        <begin position="1"/>
        <end position="363"/>
    </location>
</feature>
<comment type="function">
    <text evidence="1">The glycine cleavage system catalyzes the degradation of glycine.</text>
</comment>
<comment type="catalytic activity">
    <reaction evidence="1">
        <text>N(6)-[(R)-S(8)-aminomethyldihydrolipoyl]-L-lysyl-[protein] + (6S)-5,6,7,8-tetrahydrofolate = N(6)-[(R)-dihydrolipoyl]-L-lysyl-[protein] + (6R)-5,10-methylene-5,6,7,8-tetrahydrofolate + NH4(+)</text>
        <dbReference type="Rhea" id="RHEA:16945"/>
        <dbReference type="Rhea" id="RHEA-COMP:10475"/>
        <dbReference type="Rhea" id="RHEA-COMP:10492"/>
        <dbReference type="ChEBI" id="CHEBI:15636"/>
        <dbReference type="ChEBI" id="CHEBI:28938"/>
        <dbReference type="ChEBI" id="CHEBI:57453"/>
        <dbReference type="ChEBI" id="CHEBI:83100"/>
        <dbReference type="ChEBI" id="CHEBI:83143"/>
        <dbReference type="EC" id="2.1.2.10"/>
    </reaction>
</comment>
<comment type="subunit">
    <text evidence="1">The glycine cleavage system is composed of four proteins: P, T, L and H.</text>
</comment>
<comment type="similarity">
    <text evidence="1">Belongs to the GcvT family.</text>
</comment>
<reference key="1">
    <citation type="journal article" date="2003" name="Mol. Microbiol.">
        <title>Genome-based analysis of virulence genes in a non-biofilm-forming Staphylococcus epidermidis strain (ATCC 12228).</title>
        <authorList>
            <person name="Zhang Y.-Q."/>
            <person name="Ren S.-X."/>
            <person name="Li H.-L."/>
            <person name="Wang Y.-X."/>
            <person name="Fu G."/>
            <person name="Yang J."/>
            <person name="Qin Z.-Q."/>
            <person name="Miao Y.-G."/>
            <person name="Wang W.-Y."/>
            <person name="Chen R.-S."/>
            <person name="Shen Y."/>
            <person name="Chen Z."/>
            <person name="Yuan Z.-H."/>
            <person name="Zhao G.-P."/>
            <person name="Qu D."/>
            <person name="Danchin A."/>
            <person name="Wen Y.-M."/>
        </authorList>
    </citation>
    <scope>NUCLEOTIDE SEQUENCE [LARGE SCALE GENOMIC DNA]</scope>
    <source>
        <strain>ATCC 12228 / FDA PCI 1200</strain>
    </source>
</reference>